<name>PGA6_CANAL</name>
<proteinExistence type="evidence at protein level"/>
<sequence length="219" mass="22101">MQFQTLLVVAGSLVASTLAVNSTVTEHHTTEITITHCSDNKCATSVAPAVQSVNTVTIEGVVTEYTTYCPLTASEHKHKESSSPSSVAPVASTESVVTTTISGVHTSYTTYCPLSGSSEASTVITPGTVAGESSSSSEEVSYVDVTSTPVVESTTDVELTLTAQSTLFTSYANSTGSSSSSSVVPSANVTTFEGGAVGGASNQITVGFAAIAGLAAILL</sequence>
<protein>
    <recommendedName>
        <fullName>Predicted GPI-anchored protein 6</fullName>
    </recommendedName>
</protein>
<feature type="signal peptide" evidence="2">
    <location>
        <begin position="1"/>
        <end position="19"/>
    </location>
</feature>
<feature type="chain" id="PRO_0000424644" description="Predicted GPI-anchored protein 6">
    <location>
        <begin position="20"/>
        <end position="194"/>
    </location>
</feature>
<feature type="propeptide" id="PRO_0000424645" description="Removed in mature form" evidence="2">
    <location>
        <begin position="195"/>
        <end position="219"/>
    </location>
</feature>
<feature type="lipid moiety-binding region" description="GPI-anchor amidated glycine" evidence="2">
    <location>
        <position position="194"/>
    </location>
</feature>
<feature type="glycosylation site" description="N-linked (GlcNAc...) asparagine" evidence="2">
    <location>
        <position position="21"/>
    </location>
</feature>
<feature type="glycosylation site" description="N-linked (GlcNAc...) asparagine" evidence="2">
    <location>
        <position position="173"/>
    </location>
</feature>
<feature type="glycosylation site" description="N-linked (GlcNAc...) asparagine" evidence="2">
    <location>
        <position position="188"/>
    </location>
</feature>
<organism>
    <name type="scientific">Candida albicans (strain SC5314 / ATCC MYA-2876)</name>
    <name type="common">Yeast</name>
    <dbReference type="NCBI Taxonomy" id="237561"/>
    <lineage>
        <taxon>Eukaryota</taxon>
        <taxon>Fungi</taxon>
        <taxon>Dikarya</taxon>
        <taxon>Ascomycota</taxon>
        <taxon>Saccharomycotina</taxon>
        <taxon>Pichiomycetes</taxon>
        <taxon>Debaryomycetaceae</taxon>
        <taxon>Candida/Lodderomyces clade</taxon>
        <taxon>Candida</taxon>
    </lineage>
</organism>
<accession>Q5APJ9</accession>
<accession>A0A1D8PEI1</accession>
<gene>
    <name type="primary">PGA6</name>
    <name type="synonym">CCW12</name>
    <name type="ordered locus">CAALFM_C109080CA</name>
    <name type="ORF">CaO19.12229</name>
    <name type="ORF">CaO19.4765</name>
</gene>
<reference key="1">
    <citation type="journal article" date="2004" name="Proc. Natl. Acad. Sci. U.S.A.">
        <title>The diploid genome sequence of Candida albicans.</title>
        <authorList>
            <person name="Jones T."/>
            <person name="Federspiel N.A."/>
            <person name="Chibana H."/>
            <person name="Dungan J."/>
            <person name="Kalman S."/>
            <person name="Magee B.B."/>
            <person name="Newport G."/>
            <person name="Thorstenson Y.R."/>
            <person name="Agabian N."/>
            <person name="Magee P.T."/>
            <person name="Davis R.W."/>
            <person name="Scherer S."/>
        </authorList>
    </citation>
    <scope>NUCLEOTIDE SEQUENCE [LARGE SCALE GENOMIC DNA]</scope>
    <source>
        <strain>SC5314 / ATCC MYA-2876</strain>
    </source>
</reference>
<reference key="2">
    <citation type="journal article" date="2007" name="Genome Biol.">
        <title>Assembly of the Candida albicans genome into sixteen supercontigs aligned on the eight chromosomes.</title>
        <authorList>
            <person name="van het Hoog M."/>
            <person name="Rast T.J."/>
            <person name="Martchenko M."/>
            <person name="Grindle S."/>
            <person name="Dignard D."/>
            <person name="Hogues H."/>
            <person name="Cuomo C."/>
            <person name="Berriman M."/>
            <person name="Scherer S."/>
            <person name="Magee B.B."/>
            <person name="Whiteway M."/>
            <person name="Chibana H."/>
            <person name="Nantel A."/>
            <person name="Magee P.T."/>
        </authorList>
    </citation>
    <scope>GENOME REANNOTATION</scope>
    <source>
        <strain>SC5314 / ATCC MYA-2876</strain>
    </source>
</reference>
<reference key="3">
    <citation type="journal article" date="2013" name="Genome Biol.">
        <title>Assembly of a phased diploid Candida albicans genome facilitates allele-specific measurements and provides a simple model for repeat and indel structure.</title>
        <authorList>
            <person name="Muzzey D."/>
            <person name="Schwartz K."/>
            <person name="Weissman J.S."/>
            <person name="Sherlock G."/>
        </authorList>
    </citation>
    <scope>NUCLEOTIDE SEQUENCE [LARGE SCALE GENOMIC DNA]</scope>
    <scope>GENOME REANNOTATION</scope>
    <source>
        <strain>SC5314 / ATCC MYA-2876</strain>
    </source>
</reference>
<reference key="4">
    <citation type="journal article" date="2003" name="Yeast">
        <title>Genome-wide identification of fungal GPI proteins.</title>
        <authorList>
            <person name="De Groot P.W."/>
            <person name="Hellingwerf K.J."/>
            <person name="Klis F.M."/>
        </authorList>
    </citation>
    <scope>PREDICTION OF GPI-ANCHOR</scope>
</reference>
<reference key="5">
    <citation type="journal article" date="2004" name="Mol. Microbiol.">
        <title>Regulatory networks affected by iron availability in Candida albicans.</title>
        <authorList>
            <person name="Lan C.Y."/>
            <person name="Rodarte G."/>
            <person name="Murillo L.A."/>
            <person name="Jones T."/>
            <person name="Davis R.W."/>
            <person name="Dungan J."/>
            <person name="Newport G."/>
            <person name="Agabian N."/>
        </authorList>
    </citation>
    <scope>INDUCTION</scope>
</reference>
<reference key="6">
    <citation type="journal article" date="2005" name="Microbiology">
        <title>Analysis of the Candida albicans Als2p and Als4p adhesins suggests the potential for compensatory function within the Als family.</title>
        <authorList>
            <person name="Zhao X."/>
            <person name="Oh S.H."/>
            <person name="Yeater K.M."/>
            <person name="Hoyer L.L."/>
        </authorList>
    </citation>
    <scope>INDUCTION</scope>
</reference>
<reference key="7">
    <citation type="journal article" date="2007" name="Microbiology">
        <title>Temporal analysis of Candida albicans gene expression during biofilm development.</title>
        <authorList>
            <person name="Yeater K.M."/>
            <person name="Chandra J."/>
            <person name="Cheng G."/>
            <person name="Mukherjee P.K."/>
            <person name="Zhao X."/>
            <person name="Rodriguez-Zas S.L."/>
            <person name="Kwast K.E."/>
            <person name="Ghannoum M.A."/>
            <person name="Hoyer L.L."/>
        </authorList>
    </citation>
    <scope>INDUCTION</scope>
</reference>
<evidence type="ECO:0000250" key="1"/>
<evidence type="ECO:0000255" key="2"/>
<evidence type="ECO:0000269" key="3">
    <source>
    </source>
</evidence>
<evidence type="ECO:0000269" key="4">
    <source>
    </source>
</evidence>
<evidence type="ECO:0000269" key="5">
    <source>
    </source>
</evidence>
<evidence type="ECO:0000305" key="6"/>
<dbReference type="EMBL" id="CP017623">
    <property type="protein sequence ID" value="AOW26542.1"/>
    <property type="molecule type" value="Genomic_DNA"/>
</dbReference>
<dbReference type="RefSeq" id="XP_723451.1">
    <property type="nucleotide sequence ID" value="XM_718358.1"/>
</dbReference>
<dbReference type="STRING" id="237561.Q5APJ9"/>
<dbReference type="GlyCosmos" id="Q5APJ9">
    <property type="glycosylation" value="3 sites, No reported glycans"/>
</dbReference>
<dbReference type="EnsemblFungi" id="C1_09080C_A-T">
    <property type="protein sequence ID" value="C1_09080C_A-T-p1"/>
    <property type="gene ID" value="C1_09080C_A"/>
</dbReference>
<dbReference type="GeneID" id="3634774"/>
<dbReference type="KEGG" id="cal:CAALFM_C109080CA"/>
<dbReference type="CGD" id="CAL0000190753">
    <property type="gene designation" value="PGA6"/>
</dbReference>
<dbReference type="VEuPathDB" id="FungiDB:C1_09080C_A"/>
<dbReference type="eggNOG" id="ENOG502S42T">
    <property type="taxonomic scope" value="Eukaryota"/>
</dbReference>
<dbReference type="HOGENOM" id="CLU_086434_0_0_1"/>
<dbReference type="InParanoid" id="Q5APJ9"/>
<dbReference type="OMA" id="TEYTTIC"/>
<dbReference type="OrthoDB" id="3998251at2759"/>
<dbReference type="PRO" id="PR:Q5APJ9"/>
<dbReference type="Proteomes" id="UP000000559">
    <property type="component" value="Chromosome 1"/>
</dbReference>
<dbReference type="GO" id="GO:0005576">
    <property type="term" value="C:extracellular region"/>
    <property type="evidence" value="ECO:0007669"/>
    <property type="project" value="UniProtKB-KW"/>
</dbReference>
<dbReference type="GO" id="GO:0009277">
    <property type="term" value="C:fungal-type cell wall"/>
    <property type="evidence" value="ECO:0007669"/>
    <property type="project" value="UniProtKB-ARBA"/>
</dbReference>
<dbReference type="GO" id="GO:0098552">
    <property type="term" value="C:side of membrane"/>
    <property type="evidence" value="ECO:0007669"/>
    <property type="project" value="UniProtKB-KW"/>
</dbReference>
<dbReference type="Gene3D" id="6.10.250.3040">
    <property type="match status" value="1"/>
</dbReference>
<dbReference type="InterPro" id="IPR025928">
    <property type="entry name" value="Flocculin_t3_rpt"/>
</dbReference>
<dbReference type="Pfam" id="PF13928">
    <property type="entry name" value="Flocculin_t3"/>
    <property type="match status" value="2"/>
</dbReference>
<keyword id="KW-0134">Cell wall</keyword>
<keyword id="KW-0325">Glycoprotein</keyword>
<keyword id="KW-0336">GPI-anchor</keyword>
<keyword id="KW-0449">Lipoprotein</keyword>
<keyword id="KW-0472">Membrane</keyword>
<keyword id="KW-1185">Reference proteome</keyword>
<keyword id="KW-0677">Repeat</keyword>
<keyword id="KW-0964">Secreted</keyword>
<keyword id="KW-0732">Signal</keyword>
<comment type="function">
    <text evidence="1">Probable cell wall protein that participates directly in adhesive cell-cell interactions.</text>
</comment>
<comment type="subcellular location">
    <subcellularLocation>
        <location evidence="6">Secreted</location>
        <location evidence="6">Cell wall</location>
    </subcellularLocation>
    <subcellularLocation>
        <location evidence="6">Membrane</location>
        <topology evidence="6">Lipid-anchor</topology>
        <topology evidence="6">GPI-anchor</topology>
    </subcellularLocation>
    <text>Covalently-linked GPI-modified cell wall protein (GPI-CWP).</text>
</comment>
<comment type="induction">
    <text evidence="3 4 5">Up-regulated by high iron, during biofilm development, and upon ALS2 depletion.</text>
</comment>
<comment type="PTM">
    <text evidence="1">The GPI-anchor is attached to the protein in the endoplasmic reticulum and serves to target the protein to the cell surface. There, the glucosamine-inositol phospholipid moiety is cleaved off and the GPI-modified mannoprotein is covalently attached via its lipidless GPI glycan remnant to the 1,6-beta-glucan of the outer cell wall layer (By similarity).</text>
</comment>
<comment type="miscellaneous">
    <text>The PGA6 mRNA is transported by SHE3 to the hyphal tips during filamentous growth.</text>
</comment>
<comment type="similarity">
    <text evidence="6">Belongs to the flocculin family.</text>
</comment>